<accession>Q31F66</accession>
<comment type="function">
    <text evidence="1">Catalyzes the synthesis of GMP from XMP.</text>
</comment>
<comment type="catalytic activity">
    <reaction evidence="1">
        <text>XMP + L-glutamine + ATP + H2O = GMP + L-glutamate + AMP + diphosphate + 2 H(+)</text>
        <dbReference type="Rhea" id="RHEA:11680"/>
        <dbReference type="ChEBI" id="CHEBI:15377"/>
        <dbReference type="ChEBI" id="CHEBI:15378"/>
        <dbReference type="ChEBI" id="CHEBI:29985"/>
        <dbReference type="ChEBI" id="CHEBI:30616"/>
        <dbReference type="ChEBI" id="CHEBI:33019"/>
        <dbReference type="ChEBI" id="CHEBI:57464"/>
        <dbReference type="ChEBI" id="CHEBI:58115"/>
        <dbReference type="ChEBI" id="CHEBI:58359"/>
        <dbReference type="ChEBI" id="CHEBI:456215"/>
        <dbReference type="EC" id="6.3.5.2"/>
    </reaction>
</comment>
<comment type="pathway">
    <text evidence="1">Purine metabolism; GMP biosynthesis; GMP from XMP (L-Gln route): step 1/1.</text>
</comment>
<comment type="subunit">
    <text evidence="1">Homodimer.</text>
</comment>
<keyword id="KW-0067">ATP-binding</keyword>
<keyword id="KW-0315">Glutamine amidotransferase</keyword>
<keyword id="KW-0332">GMP biosynthesis</keyword>
<keyword id="KW-0436">Ligase</keyword>
<keyword id="KW-0547">Nucleotide-binding</keyword>
<keyword id="KW-0658">Purine biosynthesis</keyword>
<protein>
    <recommendedName>
        <fullName evidence="1">GMP synthase [glutamine-hydrolyzing]</fullName>
        <ecNumber evidence="1">6.3.5.2</ecNumber>
    </recommendedName>
    <alternativeName>
        <fullName evidence="1">GMP synthetase</fullName>
    </alternativeName>
    <alternativeName>
        <fullName evidence="1">Glutamine amidotransferase</fullName>
    </alternativeName>
</protein>
<name>GUAA_HYDCU</name>
<gene>
    <name evidence="1" type="primary">guaA</name>
    <name type="ordered locus">Tcr_1615</name>
</gene>
<sequence length="526" mass="58693">MSQNNIHEHRILILDFGSQYTQLIARRIREIGVYCEVEPWDIDVEDIVKFGARGIILSGGPETVTGDNAPVAPVEVFELGVPVLGICYGMQTMAEQLGGKVINATEHEYGYAQVRAHGHTKLLNDIEDHVTPEGYGMLDVWMSHGDRVDKMPEGFKLMASTGNCPIAGMANEEKDFYGIQFHPEVTHTTQGQRMIERFVVDLCGCEKLWTTENIIDDSIARIRQQVGSDEVLLGLSGGVDSSVVAALLHKAIGDQLTCVFVDHGLLRHQEGDQVMSMFAENMGIKVIRVDAEDYFMNALAGEADPEKKRKIIGHAFIEMFDQESAKLTGVKWLAQGTIYPDVIESAGSKTGKAKVIKSHHNVGGLPEDMKLELLEPLRELFKDEVRRLGVALGLPSDMVYRHPFPGPGLGVRILGEVKKEYADILRLADHIFIEELRAADLYDKTSQAFTVFLPVKSVGVVGDARRYDYVVSLRAVETIDFMTARWAHLPYDFLEKVSNRIINEIPRITRVTYDISSKPPATIEWE</sequence>
<feature type="chain" id="PRO_0000229483" description="GMP synthase [glutamine-hydrolyzing]">
    <location>
        <begin position="1"/>
        <end position="526"/>
    </location>
</feature>
<feature type="domain" description="Glutamine amidotransferase type-1" evidence="1">
    <location>
        <begin position="10"/>
        <end position="208"/>
    </location>
</feature>
<feature type="domain" description="GMPS ATP-PPase" evidence="1">
    <location>
        <begin position="209"/>
        <end position="401"/>
    </location>
</feature>
<feature type="active site" description="Nucleophile" evidence="1">
    <location>
        <position position="87"/>
    </location>
</feature>
<feature type="active site" evidence="1">
    <location>
        <position position="182"/>
    </location>
</feature>
<feature type="active site" evidence="1">
    <location>
        <position position="184"/>
    </location>
</feature>
<feature type="binding site" evidence="1">
    <location>
        <begin position="236"/>
        <end position="242"/>
    </location>
    <ligand>
        <name>ATP</name>
        <dbReference type="ChEBI" id="CHEBI:30616"/>
    </ligand>
</feature>
<proteinExistence type="inferred from homology"/>
<reference key="1">
    <citation type="journal article" date="2006" name="PLoS Biol.">
        <title>The genome of deep-sea vent chemolithoautotroph Thiomicrospira crunogena XCL-2.</title>
        <authorList>
            <person name="Scott K.M."/>
            <person name="Sievert S.M."/>
            <person name="Abril F.N."/>
            <person name="Ball L.A."/>
            <person name="Barrett C.J."/>
            <person name="Blake R.A."/>
            <person name="Boller A.J."/>
            <person name="Chain P.S.G."/>
            <person name="Clark J.A."/>
            <person name="Davis C.R."/>
            <person name="Detter C."/>
            <person name="Do K.F."/>
            <person name="Dobrinski K.P."/>
            <person name="Faza B.I."/>
            <person name="Fitzpatrick K.A."/>
            <person name="Freyermuth S.K."/>
            <person name="Harmer T.L."/>
            <person name="Hauser L.J."/>
            <person name="Huegler M."/>
            <person name="Kerfeld C.A."/>
            <person name="Klotz M.G."/>
            <person name="Kong W.W."/>
            <person name="Land M."/>
            <person name="Lapidus A."/>
            <person name="Larimer F.W."/>
            <person name="Longo D.L."/>
            <person name="Lucas S."/>
            <person name="Malfatti S.A."/>
            <person name="Massey S.E."/>
            <person name="Martin D.D."/>
            <person name="McCuddin Z."/>
            <person name="Meyer F."/>
            <person name="Moore J.L."/>
            <person name="Ocampo L.H. Jr."/>
            <person name="Paul J.H."/>
            <person name="Paulsen I.T."/>
            <person name="Reep D.K."/>
            <person name="Ren Q."/>
            <person name="Ross R.L."/>
            <person name="Sato P.Y."/>
            <person name="Thomas P."/>
            <person name="Tinkham L.E."/>
            <person name="Zeruth G.T."/>
        </authorList>
    </citation>
    <scope>NUCLEOTIDE SEQUENCE [LARGE SCALE GENOMIC DNA]</scope>
    <source>
        <strain>DSM 25203 / XCL-2</strain>
    </source>
</reference>
<evidence type="ECO:0000255" key="1">
    <source>
        <dbReference type="HAMAP-Rule" id="MF_00344"/>
    </source>
</evidence>
<organism>
    <name type="scientific">Hydrogenovibrio crunogenus (strain DSM 25203 / XCL-2)</name>
    <name type="common">Thiomicrospira crunogena</name>
    <dbReference type="NCBI Taxonomy" id="317025"/>
    <lineage>
        <taxon>Bacteria</taxon>
        <taxon>Pseudomonadati</taxon>
        <taxon>Pseudomonadota</taxon>
        <taxon>Gammaproteobacteria</taxon>
        <taxon>Thiotrichales</taxon>
        <taxon>Piscirickettsiaceae</taxon>
        <taxon>Hydrogenovibrio</taxon>
    </lineage>
</organism>
<dbReference type="EC" id="6.3.5.2" evidence="1"/>
<dbReference type="EMBL" id="CP000109">
    <property type="protein sequence ID" value="ABB42207.1"/>
    <property type="molecule type" value="Genomic_DNA"/>
</dbReference>
<dbReference type="SMR" id="Q31F66"/>
<dbReference type="STRING" id="317025.Tcr_1615"/>
<dbReference type="KEGG" id="tcx:Tcr_1615"/>
<dbReference type="eggNOG" id="COG0518">
    <property type="taxonomic scope" value="Bacteria"/>
</dbReference>
<dbReference type="eggNOG" id="COG0519">
    <property type="taxonomic scope" value="Bacteria"/>
</dbReference>
<dbReference type="HOGENOM" id="CLU_014340_0_5_6"/>
<dbReference type="OrthoDB" id="9802219at2"/>
<dbReference type="UniPathway" id="UPA00189">
    <property type="reaction ID" value="UER00296"/>
</dbReference>
<dbReference type="GO" id="GO:0005829">
    <property type="term" value="C:cytosol"/>
    <property type="evidence" value="ECO:0007669"/>
    <property type="project" value="TreeGrafter"/>
</dbReference>
<dbReference type="GO" id="GO:0005524">
    <property type="term" value="F:ATP binding"/>
    <property type="evidence" value="ECO:0007669"/>
    <property type="project" value="UniProtKB-UniRule"/>
</dbReference>
<dbReference type="GO" id="GO:0003921">
    <property type="term" value="F:GMP synthase activity"/>
    <property type="evidence" value="ECO:0007669"/>
    <property type="project" value="InterPro"/>
</dbReference>
<dbReference type="CDD" id="cd01742">
    <property type="entry name" value="GATase1_GMP_Synthase"/>
    <property type="match status" value="1"/>
</dbReference>
<dbReference type="CDD" id="cd01997">
    <property type="entry name" value="GMP_synthase_C"/>
    <property type="match status" value="1"/>
</dbReference>
<dbReference type="FunFam" id="3.30.300.10:FF:000002">
    <property type="entry name" value="GMP synthase [glutamine-hydrolyzing]"/>
    <property type="match status" value="1"/>
</dbReference>
<dbReference type="FunFam" id="3.40.50.620:FF:000001">
    <property type="entry name" value="GMP synthase [glutamine-hydrolyzing]"/>
    <property type="match status" value="1"/>
</dbReference>
<dbReference type="FunFam" id="3.40.50.880:FF:000001">
    <property type="entry name" value="GMP synthase [glutamine-hydrolyzing]"/>
    <property type="match status" value="1"/>
</dbReference>
<dbReference type="Gene3D" id="3.30.300.10">
    <property type="match status" value="1"/>
</dbReference>
<dbReference type="Gene3D" id="3.40.50.880">
    <property type="match status" value="1"/>
</dbReference>
<dbReference type="Gene3D" id="3.40.50.620">
    <property type="entry name" value="HUPs"/>
    <property type="match status" value="1"/>
</dbReference>
<dbReference type="HAMAP" id="MF_00344">
    <property type="entry name" value="GMP_synthase"/>
    <property type="match status" value="1"/>
</dbReference>
<dbReference type="InterPro" id="IPR029062">
    <property type="entry name" value="Class_I_gatase-like"/>
</dbReference>
<dbReference type="InterPro" id="IPR017926">
    <property type="entry name" value="GATASE"/>
</dbReference>
<dbReference type="InterPro" id="IPR001674">
    <property type="entry name" value="GMP_synth_C"/>
</dbReference>
<dbReference type="InterPro" id="IPR004739">
    <property type="entry name" value="GMP_synth_GATase"/>
</dbReference>
<dbReference type="InterPro" id="IPR022955">
    <property type="entry name" value="GMP_synthase"/>
</dbReference>
<dbReference type="InterPro" id="IPR025777">
    <property type="entry name" value="GMPS_ATP_PPase_dom"/>
</dbReference>
<dbReference type="InterPro" id="IPR022310">
    <property type="entry name" value="NAD/GMP_synthase"/>
</dbReference>
<dbReference type="InterPro" id="IPR014729">
    <property type="entry name" value="Rossmann-like_a/b/a_fold"/>
</dbReference>
<dbReference type="NCBIfam" id="TIGR00884">
    <property type="entry name" value="guaA_Cterm"/>
    <property type="match status" value="1"/>
</dbReference>
<dbReference type="NCBIfam" id="TIGR00888">
    <property type="entry name" value="guaA_Nterm"/>
    <property type="match status" value="1"/>
</dbReference>
<dbReference type="NCBIfam" id="NF000848">
    <property type="entry name" value="PRK00074.1"/>
    <property type="match status" value="1"/>
</dbReference>
<dbReference type="PANTHER" id="PTHR11922:SF2">
    <property type="entry name" value="GMP SYNTHASE [GLUTAMINE-HYDROLYZING]"/>
    <property type="match status" value="1"/>
</dbReference>
<dbReference type="PANTHER" id="PTHR11922">
    <property type="entry name" value="GMP SYNTHASE-RELATED"/>
    <property type="match status" value="1"/>
</dbReference>
<dbReference type="Pfam" id="PF00117">
    <property type="entry name" value="GATase"/>
    <property type="match status" value="1"/>
</dbReference>
<dbReference type="Pfam" id="PF00958">
    <property type="entry name" value="GMP_synt_C"/>
    <property type="match status" value="1"/>
</dbReference>
<dbReference type="Pfam" id="PF02540">
    <property type="entry name" value="NAD_synthase"/>
    <property type="match status" value="1"/>
</dbReference>
<dbReference type="PRINTS" id="PR00097">
    <property type="entry name" value="ANTSNTHASEII"/>
</dbReference>
<dbReference type="PRINTS" id="PR00096">
    <property type="entry name" value="GATASE"/>
</dbReference>
<dbReference type="SUPFAM" id="SSF52402">
    <property type="entry name" value="Adenine nucleotide alpha hydrolases-like"/>
    <property type="match status" value="1"/>
</dbReference>
<dbReference type="SUPFAM" id="SSF52317">
    <property type="entry name" value="Class I glutamine amidotransferase-like"/>
    <property type="match status" value="1"/>
</dbReference>
<dbReference type="SUPFAM" id="SSF54810">
    <property type="entry name" value="GMP synthetase C-terminal dimerisation domain"/>
    <property type="match status" value="1"/>
</dbReference>
<dbReference type="PROSITE" id="PS51273">
    <property type="entry name" value="GATASE_TYPE_1"/>
    <property type="match status" value="1"/>
</dbReference>
<dbReference type="PROSITE" id="PS51553">
    <property type="entry name" value="GMPS_ATP_PPASE"/>
    <property type="match status" value="1"/>
</dbReference>